<comment type="function">
    <text evidence="4 6">Atypical E3 ubiquitin-protein ligase that mediates 'Lys-63'-linked ubiquitination of MAP3K14/NIK, leading to stabilize and activate MAP3K14/NIK. It thereby acts as an activator of the non-canonical NF-kappa-B2/NFKB2 pathway. May also play an important role in cell proliferation and/or anti-apoptosis.</text>
</comment>
<comment type="catalytic activity">
    <reaction>
        <text>S-ubiquitinyl-[E2 ubiquitin-conjugating enzyme]-L-cysteine + [acceptor protein]-L-lysine = [E2 ubiquitin-conjugating enzyme]-L-cysteine + N(6)-ubiquitinyl-[acceptor protein]-L-lysine.</text>
        <dbReference type="EC" id="2.3.2.27"/>
    </reaction>
</comment>
<comment type="pathway">
    <text>Protein modification; protein ubiquitination.</text>
</comment>
<comment type="subunit">
    <text evidence="6 9">Interacts with MAP3K14/NIK.</text>
</comment>
<comment type="interaction">
    <interactant intactId="EBI-1052613">
        <id>Q96JP5</id>
    </interactant>
    <interactant intactId="EBI-712648">
        <id>O95994</id>
        <label>AGR2</label>
    </interactant>
    <organismsDiffer>false</organismsDiffer>
    <experiments>3</experiments>
</comment>
<comment type="interaction">
    <interactant intactId="EBI-1052613">
        <id>Q96JP5</id>
    </interactant>
    <interactant intactId="EBI-739624">
        <id>Q8NHQ1</id>
        <label>CEP70</label>
    </interactant>
    <organismsDiffer>false</organismsDiffer>
    <experiments>3</experiments>
</comment>
<comment type="interaction">
    <interactant intactId="EBI-1052613">
        <id>Q96JP5</id>
    </interactant>
    <interactant intactId="EBI-8468186">
        <id>Q8IZU1</id>
        <label>FAM9A</label>
    </interactant>
    <organismsDiffer>false</organismsDiffer>
    <experiments>3</experiments>
</comment>
<comment type="interaction">
    <interactant intactId="EBI-1052613">
        <id>Q96JP5</id>
    </interactant>
    <interactant intactId="EBI-79165">
        <id>Q9NRD5</id>
        <label>PICK1</label>
    </interactant>
    <organismsDiffer>false</organismsDiffer>
    <experiments>3</experiments>
</comment>
<comment type="interaction">
    <interactant intactId="EBI-1052613">
        <id>Q96JP5</id>
    </interactant>
    <interactant intactId="EBI-12029004">
        <id>P78424</id>
        <label>POU6F2</label>
    </interactant>
    <organismsDiffer>false</organismsDiffer>
    <experiments>3</experiments>
</comment>
<comment type="interaction">
    <interactant intactId="EBI-1052613">
        <id>Q96JP5</id>
    </interactant>
    <interactant intactId="EBI-11952721">
        <id>Q05BL1</id>
        <label>TP53BP2</label>
    </interactant>
    <organismsDiffer>false</organismsDiffer>
    <experiments>3</experiments>
</comment>
<comment type="interaction">
    <interactant intactId="EBI-1052613">
        <id>Q96JP5</id>
    </interactant>
    <interactant intactId="EBI-947459">
        <id>Q9H2G4</id>
        <label>TSPYL2</label>
    </interactant>
    <organismsDiffer>false</organismsDiffer>
    <experiments>3</experiments>
</comment>
<comment type="interaction">
    <interactant intactId="EBI-1052613">
        <id>Q96JP5</id>
    </interactant>
    <interactant intactId="EBI-10180829">
        <id>Q7KZS0</id>
        <label>UBE2I</label>
    </interactant>
    <organismsDiffer>false</organismsDiffer>
    <experiments>3</experiments>
</comment>
<comment type="interaction">
    <interactant intactId="EBI-1052613">
        <id>Q96JP5</id>
    </interactant>
    <interactant intactId="EBI-12224489">
        <id>Q8N8Y5</id>
        <label>ZFP41</label>
    </interactant>
    <organismsDiffer>false</organismsDiffer>
    <experiments>3</experiments>
</comment>
<comment type="interaction">
    <interactant intactId="EBI-1052613">
        <id>Q96JP5</id>
    </interactant>
    <interactant intactId="EBI-11035148">
        <id>Q8TF50</id>
        <label>ZNF526</label>
    </interactant>
    <organismsDiffer>false</organismsDiffer>
    <experiments>3</experiments>
</comment>
<comment type="subcellular location">
    <subcellularLocation>
        <location evidence="4">Nucleus</location>
    </subcellularLocation>
</comment>
<comment type="alternative products">
    <event type="alternative splicing"/>
    <isoform>
        <id>Q96JP5-1</id>
        <name>1</name>
        <sequence type="displayed"/>
    </isoform>
    <isoform>
        <id>Q96JP5-2</id>
        <name>2</name>
        <sequence type="described" ref="VSP_012686 VSP_012687"/>
    </isoform>
</comment>
<comment type="tissue specificity">
    <text>Expressed ubiquitously, particularly at high level in testis. Isoform 2 is testis specific.</text>
</comment>
<comment type="miscellaneous">
    <text>In contrast to other E3 ubiquitin-protein ligase, does not contain any domain (RING-type zinc finger or HECT domain) known to mediate E3 ligase activity.</text>
</comment>
<comment type="similarity">
    <text evidence="11">Belongs to the krueppel C2H2-type zinc-finger protein family.</text>
</comment>
<comment type="sequence caution" evidence="11">
    <conflict type="frameshift">
        <sequence resource="EMBL-CDS" id="AAL09963"/>
    </conflict>
</comment>
<protein>
    <recommendedName>
        <fullName>E3 ubiquitin-protein ligase ZFP91</fullName>
        <ecNumber>2.3.2.27</ecNumber>
    </recommendedName>
    <alternativeName>
        <fullName>RING-type E3 ubiquitin transferase ZFP91</fullName>
    </alternativeName>
    <alternativeName>
        <fullName>Zinc finger protein 757</fullName>
    </alternativeName>
    <alternativeName>
        <fullName>Zinc finger protein 91 homolog</fullName>
        <shortName>Zfp-91</shortName>
    </alternativeName>
</protein>
<gene>
    <name type="primary">ZFP91</name>
    <name type="synonym">ZNF757</name>
    <name type="ORF">FKSG11</name>
</gene>
<evidence type="ECO:0000250" key="1">
    <source>
        <dbReference type="UniProtKB" id="Q62511"/>
    </source>
</evidence>
<evidence type="ECO:0000255" key="2">
    <source>
        <dbReference type="PROSITE-ProRule" id="PRU00042"/>
    </source>
</evidence>
<evidence type="ECO:0000256" key="3">
    <source>
        <dbReference type="SAM" id="MobiDB-lite"/>
    </source>
</evidence>
<evidence type="ECO:0000269" key="4">
    <source>
    </source>
</evidence>
<evidence type="ECO:0000269" key="5">
    <source>
    </source>
</evidence>
<evidence type="ECO:0000269" key="6">
    <source>
    </source>
</evidence>
<evidence type="ECO:0000269" key="7">
    <source ref="5"/>
</evidence>
<evidence type="ECO:0000269" key="8">
    <source ref="6"/>
</evidence>
<evidence type="ECO:0000269" key="9">
    <source ref="8"/>
</evidence>
<evidence type="ECO:0000303" key="10">
    <source>
    </source>
</evidence>
<evidence type="ECO:0000305" key="11"/>
<evidence type="ECO:0007829" key="12">
    <source>
        <dbReference type="PDB" id="2M9A"/>
    </source>
</evidence>
<accession>Q96JP5</accession>
<accession>A6NHC4</accession>
<accession>A8MSG7</accession>
<accession>Q86V47</accession>
<accession>Q96JP4</accession>
<accession>Q96QA3</accession>
<feature type="initiator methionine" description="Removed" evidence="7">
    <location>
        <position position="1"/>
    </location>
</feature>
<feature type="chain" id="PRO_0000047312" description="E3 ubiquitin-protein ligase ZFP91">
    <location>
        <begin position="2"/>
        <end position="570"/>
    </location>
</feature>
<feature type="zinc finger region" description="C2H2-type 1" evidence="2">
    <location>
        <begin position="311"/>
        <end position="336"/>
    </location>
</feature>
<feature type="zinc finger region" description="C2H2-type 2" evidence="2">
    <location>
        <begin position="342"/>
        <end position="366"/>
    </location>
</feature>
<feature type="zinc finger region" description="C2H2-type 3" evidence="2">
    <location>
        <begin position="372"/>
        <end position="394"/>
    </location>
</feature>
<feature type="zinc finger region" description="C2H2-type 4" evidence="2">
    <location>
        <begin position="400"/>
        <end position="422"/>
    </location>
</feature>
<feature type="zinc finger region" description="C2H2-type 5" evidence="2">
    <location>
        <begin position="430"/>
        <end position="453"/>
    </location>
</feature>
<feature type="region of interest" description="Disordered" evidence="3">
    <location>
        <begin position="1"/>
        <end position="306"/>
    </location>
</feature>
<feature type="region of interest" description="Interaction with MAP3K14/NIK" evidence="6">
    <location>
        <begin position="338"/>
        <end position="368"/>
    </location>
</feature>
<feature type="compositionally biased region" description="Basic and acidic residues" evidence="3">
    <location>
        <begin position="1"/>
        <end position="12"/>
    </location>
</feature>
<feature type="compositionally biased region" description="Low complexity" evidence="3">
    <location>
        <begin position="31"/>
        <end position="43"/>
    </location>
</feature>
<feature type="compositionally biased region" description="Low complexity" evidence="3">
    <location>
        <begin position="59"/>
        <end position="68"/>
    </location>
</feature>
<feature type="compositionally biased region" description="Basic residues" evidence="3">
    <location>
        <begin position="69"/>
        <end position="82"/>
    </location>
</feature>
<feature type="compositionally biased region" description="Polar residues" evidence="3">
    <location>
        <begin position="94"/>
        <end position="104"/>
    </location>
</feature>
<feature type="compositionally biased region" description="Basic and acidic residues" evidence="3">
    <location>
        <begin position="119"/>
        <end position="128"/>
    </location>
</feature>
<feature type="compositionally biased region" description="Acidic residues" evidence="3">
    <location>
        <begin position="207"/>
        <end position="223"/>
    </location>
</feature>
<feature type="compositionally biased region" description="Basic and acidic residues" evidence="3">
    <location>
        <begin position="224"/>
        <end position="245"/>
    </location>
</feature>
<feature type="compositionally biased region" description="Basic and acidic residues" evidence="3">
    <location>
        <begin position="252"/>
        <end position="269"/>
    </location>
</feature>
<feature type="compositionally biased region" description="Acidic residues" evidence="3">
    <location>
        <begin position="270"/>
        <end position="282"/>
    </location>
</feature>
<feature type="modified residue" description="Phosphoserine" evidence="1">
    <location>
        <position position="83"/>
    </location>
</feature>
<feature type="modified residue" description="Phosphoserine" evidence="1">
    <location>
        <position position="103"/>
    </location>
</feature>
<feature type="splice variant" id="VSP_012686" description="In isoform 2." evidence="10">
    <original>VSLM</original>
    <variation>SIHR</variation>
    <location>
        <begin position="526"/>
        <end position="529"/>
    </location>
</feature>
<feature type="splice variant" id="VSP_012687" description="In isoform 2." evidence="10">
    <location>
        <begin position="530"/>
        <end position="570"/>
    </location>
</feature>
<feature type="sequence variant" id="VAR_032454" description="In dbSNP:rs17854702." evidence="5">
    <original>V</original>
    <variation>I</variation>
    <location>
        <position position="37"/>
    </location>
</feature>
<feature type="sequence variant" id="VAR_021889" description="In dbSNP:rs8373." evidence="8">
    <original>S</original>
    <variation>G</variation>
    <location>
        <position position="207"/>
    </location>
</feature>
<feature type="mutagenesis site" description="Abolishes ubiquitination of MAP3K14/NIK; when associated with A-349." evidence="6">
    <original>C</original>
    <variation>A</variation>
    <location>
        <position position="344"/>
    </location>
</feature>
<feature type="mutagenesis site" description="Abolishes ubiquitination of MAP3K14/NIK; when associated with A-344." evidence="6">
    <original>C</original>
    <variation>A</variation>
    <location>
        <position position="349"/>
    </location>
</feature>
<feature type="sequence conflict" description="In Ref. 6; AAL09963." evidence="11" ref="6">
    <original>A</original>
    <variation>V</variation>
    <location>
        <position position="74"/>
    </location>
</feature>
<feature type="sequence conflict" description="In Ref. 4; AAH51743." evidence="11" ref="4">
    <location>
        <position position="206"/>
    </location>
</feature>
<feature type="strand" evidence="12">
    <location>
        <begin position="381"/>
        <end position="383"/>
    </location>
</feature>
<feature type="helix" evidence="12">
    <location>
        <begin position="384"/>
        <end position="390"/>
    </location>
</feature>
<feature type="helix" evidence="12">
    <location>
        <begin position="391"/>
        <end position="393"/>
    </location>
</feature>
<feature type="strand" evidence="12">
    <location>
        <begin position="395"/>
        <end position="397"/>
    </location>
</feature>
<feature type="strand" evidence="12">
    <location>
        <begin position="408"/>
        <end position="411"/>
    </location>
</feature>
<feature type="helix" evidence="12">
    <location>
        <begin position="412"/>
        <end position="423"/>
    </location>
</feature>
<feature type="strand" evidence="12">
    <location>
        <begin position="426"/>
        <end position="429"/>
    </location>
</feature>
<feature type="turn" evidence="12">
    <location>
        <begin position="433"/>
        <end position="435"/>
    </location>
</feature>
<feature type="helix" evidence="12">
    <location>
        <begin position="442"/>
        <end position="452"/>
    </location>
</feature>
<proteinExistence type="evidence at protein level"/>
<keyword id="KW-0002">3D-structure</keyword>
<keyword id="KW-0025">Alternative splicing</keyword>
<keyword id="KW-0903">Direct protein sequencing</keyword>
<keyword id="KW-0479">Metal-binding</keyword>
<keyword id="KW-0539">Nucleus</keyword>
<keyword id="KW-0597">Phosphoprotein</keyword>
<keyword id="KW-1267">Proteomics identification</keyword>
<keyword id="KW-1185">Reference proteome</keyword>
<keyword id="KW-0677">Repeat</keyword>
<keyword id="KW-0808">Transferase</keyword>
<keyword id="KW-0833">Ubl conjugation pathway</keyword>
<keyword id="KW-0862">Zinc</keyword>
<keyword id="KW-0863">Zinc-finger</keyword>
<sequence length="570" mass="63445">MPGETEEPRPPEQQDQEGGEAAKAAPEEPQQRPPEAVAAAPAGTTSSRVLRGGRDRGRAAAAAAAAAVSRRRKAEYPRRRRSSPSARPPDVPGQQPQAAKSPSPVQGKKSPRLLCIEKVTTDKDPKEEKEEEDDSALPQEVSIAASRPSRGWRSSRTSVSRHRDTENTRSSRSKTGSLQLICKSEPNTDQLDYDVGEEHQSPGGISSEEEEEEEEEMLISEEEIPFKDDPRDETYKPHLERETPKPRRKSGKVKEEKEKKEIKVEVEVEVKEEENEIREDEEPPRKRGRRRKDDKSPRLPKRRKKPPIQYVRCEMEGCGTVLAHPRYLQHHIKYQHLLKKKYVCPHPSCGRLFRLQKQLLRHAKHHTDQRDYICEYCARAFKSSHNLAVHRMIHTGEKPLQCEICGFTCRQKASLNWHMKKHDADSFYQFSCNICGKKFEKKDSVVAHKAKSHPEVLIAEALAANAGALITSTDILGTNPESLTQPSDGQGLPLLPEPLGNSTSGECLLLEAEGMSKSYCSGTERVSLMADGKIFVGSGSSGGTEGLVMNSDILGATTEVLIEDSDSAGP</sequence>
<reference key="1">
    <citation type="journal article" date="2003" name="Int. J. Oncol.">
        <title>Identification of a novel human gene, ZFP91, involved in acute myelogenous leukemia.</title>
        <authorList>
            <person name="Unoki M."/>
            <person name="Okutsu J."/>
            <person name="Nakamura Y."/>
        </authorList>
    </citation>
    <scope>NUCLEOTIDE SEQUENCE [MRNA] (ISOFORMS 1 AND 2)</scope>
    <scope>FUNCTION</scope>
    <scope>SUBCELLULAR LOCATION</scope>
    <source>
        <tissue>Leukocyte</tissue>
    </source>
</reference>
<reference key="2">
    <citation type="journal article" date="2006" name="Nature">
        <title>Human chromosome 11 DNA sequence and analysis including novel gene identification.</title>
        <authorList>
            <person name="Taylor T.D."/>
            <person name="Noguchi H."/>
            <person name="Totoki Y."/>
            <person name="Toyoda A."/>
            <person name="Kuroki Y."/>
            <person name="Dewar K."/>
            <person name="Lloyd C."/>
            <person name="Itoh T."/>
            <person name="Takeda T."/>
            <person name="Kim D.-W."/>
            <person name="She X."/>
            <person name="Barlow K.F."/>
            <person name="Bloom T."/>
            <person name="Bruford E."/>
            <person name="Chang J.L."/>
            <person name="Cuomo C.A."/>
            <person name="Eichler E."/>
            <person name="FitzGerald M.G."/>
            <person name="Jaffe D.B."/>
            <person name="LaButti K."/>
            <person name="Nicol R."/>
            <person name="Park H.-S."/>
            <person name="Seaman C."/>
            <person name="Sougnez C."/>
            <person name="Yang X."/>
            <person name="Zimmer A.R."/>
            <person name="Zody M.C."/>
            <person name="Birren B.W."/>
            <person name="Nusbaum C."/>
            <person name="Fujiyama A."/>
            <person name="Hattori M."/>
            <person name="Rogers J."/>
            <person name="Lander E.S."/>
            <person name="Sakaki Y."/>
        </authorList>
    </citation>
    <scope>NUCLEOTIDE SEQUENCE [LARGE SCALE GENOMIC DNA]</scope>
</reference>
<reference key="3">
    <citation type="submission" date="2005-07" db="EMBL/GenBank/DDBJ databases">
        <authorList>
            <person name="Mural R.J."/>
            <person name="Istrail S."/>
            <person name="Sutton G.G."/>
            <person name="Florea L."/>
            <person name="Halpern A.L."/>
            <person name="Mobarry C.M."/>
            <person name="Lippert R."/>
            <person name="Walenz B."/>
            <person name="Shatkay H."/>
            <person name="Dew I."/>
            <person name="Miller J.R."/>
            <person name="Flanigan M.J."/>
            <person name="Edwards N.J."/>
            <person name="Bolanos R."/>
            <person name="Fasulo D."/>
            <person name="Halldorsson B.V."/>
            <person name="Hannenhalli S."/>
            <person name="Turner R."/>
            <person name="Yooseph S."/>
            <person name="Lu F."/>
            <person name="Nusskern D.R."/>
            <person name="Shue B.C."/>
            <person name="Zheng X.H."/>
            <person name="Zhong F."/>
            <person name="Delcher A.L."/>
            <person name="Huson D.H."/>
            <person name="Kravitz S.A."/>
            <person name="Mouchard L."/>
            <person name="Reinert K."/>
            <person name="Remington K.A."/>
            <person name="Clark A.G."/>
            <person name="Waterman M.S."/>
            <person name="Eichler E.E."/>
            <person name="Adams M.D."/>
            <person name="Hunkapiller M.W."/>
            <person name="Myers E.W."/>
            <person name="Venter J.C."/>
        </authorList>
    </citation>
    <scope>NUCLEOTIDE SEQUENCE [LARGE SCALE GENOMIC DNA]</scope>
</reference>
<reference key="4">
    <citation type="journal article" date="2004" name="Genome Res.">
        <title>The status, quality, and expansion of the NIH full-length cDNA project: the Mammalian Gene Collection (MGC).</title>
        <authorList>
            <consortium name="The MGC Project Team"/>
        </authorList>
    </citation>
    <scope>NUCLEOTIDE SEQUENCE [LARGE SCALE MRNA] (ISOFORM 1)</scope>
    <scope>VARIANT ILE-37</scope>
    <source>
        <tissue>Testis</tissue>
    </source>
</reference>
<reference key="5">
    <citation type="submission" date="2009-03" db="UniProtKB">
        <authorList>
            <person name="Bienvenut W.V."/>
            <person name="Waridel P."/>
            <person name="Quadroni M."/>
        </authorList>
    </citation>
    <scope>PROTEIN SEQUENCE OF 2-23</scope>
    <scope>CLEAVAGE OF INITIATOR METHIONINE</scope>
    <scope>IDENTIFICATION BY MASS SPECTROMETRY</scope>
    <source>
        <tissue>Cervix carcinoma</tissue>
    </source>
</reference>
<reference key="6">
    <citation type="submission" date="2000-10" db="EMBL/GenBank/DDBJ databases">
        <title>Identification of FKSG11, a novel gene related to breast cancer.</title>
        <authorList>
            <person name="Wang Y.-G."/>
        </authorList>
    </citation>
    <scope>NUCLEOTIDE SEQUENCE [MRNA] OF 67-570 (ISOFORM 1)</scope>
    <scope>VARIANT GLY-207</scope>
</reference>
<reference key="7">
    <citation type="journal article" date="2010" name="J. Biol. Chem.">
        <title>An atypical E3 ligase zinc finger protein 91 stabilizes and activates NF-kappaB-inducing kinase via Lys63-linked ubiquitination.</title>
        <authorList>
            <person name="Jin X."/>
            <person name="Jin H.R."/>
            <person name="Jung H.S."/>
            <person name="Lee S.J."/>
            <person name="Lee J.H."/>
            <person name="Lee J.J."/>
        </authorList>
    </citation>
    <scope>FUNCTION</scope>
    <scope>INTERACTION WITH MAP3K14</scope>
    <scope>MUTAGENESIS OF CYS-344 AND CYS-349</scope>
</reference>
<reference key="8">
    <citation type="submission" date="2013-07" db="PDB data bank">
        <title>Solution structure of HR7784A.</title>
        <authorList>
            <consortium name="Northeast structural genomics consortium (NESG)"/>
        </authorList>
    </citation>
    <scope>STRUCTURE BY NMR OF 370-456 IN COMPLEX WITH ZINC IONS</scope>
</reference>
<organism>
    <name type="scientific">Homo sapiens</name>
    <name type="common">Human</name>
    <dbReference type="NCBI Taxonomy" id="9606"/>
    <lineage>
        <taxon>Eukaryota</taxon>
        <taxon>Metazoa</taxon>
        <taxon>Chordata</taxon>
        <taxon>Craniata</taxon>
        <taxon>Vertebrata</taxon>
        <taxon>Euteleostomi</taxon>
        <taxon>Mammalia</taxon>
        <taxon>Eutheria</taxon>
        <taxon>Euarchontoglires</taxon>
        <taxon>Primates</taxon>
        <taxon>Haplorrhini</taxon>
        <taxon>Catarrhini</taxon>
        <taxon>Hominidae</taxon>
        <taxon>Homo</taxon>
    </lineage>
</organism>
<dbReference type="EC" id="2.3.2.27"/>
<dbReference type="EMBL" id="AB056107">
    <property type="protein sequence ID" value="BAB63373.1"/>
    <property type="molecule type" value="mRNA"/>
</dbReference>
<dbReference type="EMBL" id="AB057443">
    <property type="protein sequence ID" value="BAB63374.1"/>
    <property type="molecule type" value="mRNA"/>
</dbReference>
<dbReference type="EMBL" id="AP001350">
    <property type="status" value="NOT_ANNOTATED_CDS"/>
    <property type="molecule type" value="Genomic_DNA"/>
</dbReference>
<dbReference type="EMBL" id="CH471076">
    <property type="protein sequence ID" value="EAW73811.1"/>
    <property type="molecule type" value="Genomic_DNA"/>
</dbReference>
<dbReference type="EMBL" id="BC051743">
    <property type="protein sequence ID" value="AAH51743.1"/>
    <property type="molecule type" value="mRNA"/>
</dbReference>
<dbReference type="EMBL" id="AF310246">
    <property type="protein sequence ID" value="AAL09963.1"/>
    <property type="status" value="ALT_FRAME"/>
    <property type="molecule type" value="mRNA"/>
</dbReference>
<dbReference type="CCDS" id="CCDS31553.1">
    <molecule id="Q96JP5-1"/>
</dbReference>
<dbReference type="RefSeq" id="NP_001183980.1">
    <property type="nucleotide sequence ID" value="NM_001197051.1"/>
</dbReference>
<dbReference type="RefSeq" id="NP_444251.1">
    <molecule id="Q96JP5-1"/>
    <property type="nucleotide sequence ID" value="NM_053023.5"/>
</dbReference>
<dbReference type="PDB" id="2M9A">
    <property type="method" value="NMR"/>
    <property type="chains" value="A=370-456"/>
</dbReference>
<dbReference type="PDBsum" id="2M9A"/>
<dbReference type="SMR" id="Q96JP5"/>
<dbReference type="BioGRID" id="123322">
    <property type="interactions" value="153"/>
</dbReference>
<dbReference type="CORUM" id="Q96JP5"/>
<dbReference type="FunCoup" id="Q96JP5">
    <property type="interactions" value="3613"/>
</dbReference>
<dbReference type="IntAct" id="Q96JP5">
    <property type="interactions" value="89"/>
</dbReference>
<dbReference type="MINT" id="Q96JP5"/>
<dbReference type="STRING" id="9606.ENSP00000339030"/>
<dbReference type="ChEMBL" id="CHEMBL4739701"/>
<dbReference type="GlyGen" id="Q96JP5">
    <property type="glycosylation" value="1 site, 1 O-linked glycan (1 site)"/>
</dbReference>
<dbReference type="iPTMnet" id="Q96JP5"/>
<dbReference type="PhosphoSitePlus" id="Q96JP5"/>
<dbReference type="BioMuta" id="ZFP91"/>
<dbReference type="DMDM" id="60416377"/>
<dbReference type="jPOST" id="Q96JP5"/>
<dbReference type="MassIVE" id="Q96JP5"/>
<dbReference type="PaxDb" id="9606-ENSP00000339030"/>
<dbReference type="PeptideAtlas" id="Q96JP5"/>
<dbReference type="ProteomicsDB" id="76999">
    <molecule id="Q96JP5-1"/>
</dbReference>
<dbReference type="ProteomicsDB" id="77000">
    <molecule id="Q96JP5-2"/>
</dbReference>
<dbReference type="Pumba" id="Q96JP5"/>
<dbReference type="Antibodypedia" id="14324">
    <property type="antibodies" value="199 antibodies from 24 providers"/>
</dbReference>
<dbReference type="DNASU" id="80829"/>
<dbReference type="Ensembl" id="ENST00000316059.7">
    <molecule id="Q96JP5-1"/>
    <property type="protein sequence ID" value="ENSP00000339030.5"/>
    <property type="gene ID" value="ENSG00000186660.15"/>
</dbReference>
<dbReference type="GeneID" id="80829"/>
<dbReference type="KEGG" id="hsa:80829"/>
<dbReference type="MANE-Select" id="ENST00000316059.7">
    <property type="protein sequence ID" value="ENSP00000339030.5"/>
    <property type="RefSeq nucleotide sequence ID" value="NM_053023.5"/>
    <property type="RefSeq protein sequence ID" value="NP_444251.1"/>
</dbReference>
<dbReference type="UCSC" id="uc001nmx.5">
    <molecule id="Q96JP5-1"/>
    <property type="organism name" value="human"/>
</dbReference>
<dbReference type="AGR" id="HGNC:14983"/>
<dbReference type="CTD" id="80829"/>
<dbReference type="DisGeNET" id="80829"/>
<dbReference type="GeneCards" id="ZFP91"/>
<dbReference type="HGNC" id="HGNC:14983">
    <property type="gene designation" value="ZFP91"/>
</dbReference>
<dbReference type="HPA" id="ENSG00000186660">
    <property type="expression patterns" value="Low tissue specificity"/>
</dbReference>
<dbReference type="MIM" id="619289">
    <property type="type" value="gene"/>
</dbReference>
<dbReference type="neXtProt" id="NX_Q96JP5"/>
<dbReference type="OpenTargets" id="ENSG00000186660"/>
<dbReference type="PharmGKB" id="PA37955"/>
<dbReference type="VEuPathDB" id="HostDB:ENSG00000186660"/>
<dbReference type="eggNOG" id="KOG1721">
    <property type="taxonomic scope" value="Eukaryota"/>
</dbReference>
<dbReference type="GeneTree" id="ENSGT00940000156393"/>
<dbReference type="HOGENOM" id="CLU_034557_0_0_1"/>
<dbReference type="InParanoid" id="Q96JP5"/>
<dbReference type="OMA" id="YCSGAER"/>
<dbReference type="OrthoDB" id="7852576at2759"/>
<dbReference type="PAN-GO" id="Q96JP5">
    <property type="GO annotations" value="2 GO annotations based on evolutionary models"/>
</dbReference>
<dbReference type="PhylomeDB" id="Q96JP5"/>
<dbReference type="TreeFam" id="TF332664"/>
<dbReference type="PathwayCommons" id="Q96JP5"/>
<dbReference type="SignaLink" id="Q96JP5"/>
<dbReference type="SIGNOR" id="Q96JP5"/>
<dbReference type="UniPathway" id="UPA00143"/>
<dbReference type="BioGRID-ORCS" id="80829">
    <property type="hits" value="31 hits in 1182 CRISPR screens"/>
</dbReference>
<dbReference type="ChiTaRS" id="ZFP91">
    <property type="organism name" value="human"/>
</dbReference>
<dbReference type="EvolutionaryTrace" id="Q96JP5"/>
<dbReference type="GeneWiki" id="ZFP91"/>
<dbReference type="GenomeRNAi" id="80829"/>
<dbReference type="Pharos" id="Q96JP5">
    <property type="development level" value="Tbio"/>
</dbReference>
<dbReference type="PRO" id="PR:Q96JP5"/>
<dbReference type="Proteomes" id="UP000005640">
    <property type="component" value="Chromosome 11"/>
</dbReference>
<dbReference type="RNAct" id="Q96JP5">
    <property type="molecule type" value="protein"/>
</dbReference>
<dbReference type="Bgee" id="ENSG00000186660">
    <property type="expression patterns" value="Expressed in tibialis anterior and 197 other cell types or tissues"/>
</dbReference>
<dbReference type="ExpressionAtlas" id="Q96JP5">
    <property type="expression patterns" value="baseline and differential"/>
</dbReference>
<dbReference type="GO" id="GO:0005730">
    <property type="term" value="C:nucleolus"/>
    <property type="evidence" value="ECO:0000314"/>
    <property type="project" value="HPA"/>
</dbReference>
<dbReference type="GO" id="GO:0005654">
    <property type="term" value="C:nucleoplasm"/>
    <property type="evidence" value="ECO:0000314"/>
    <property type="project" value="HPA"/>
</dbReference>
<dbReference type="GO" id="GO:0005634">
    <property type="term" value="C:nucleus"/>
    <property type="evidence" value="ECO:0000318"/>
    <property type="project" value="GO_Central"/>
</dbReference>
<dbReference type="GO" id="GO:0004842">
    <property type="term" value="F:ubiquitin-protein transferase activity"/>
    <property type="evidence" value="ECO:0000314"/>
    <property type="project" value="UniProtKB"/>
</dbReference>
<dbReference type="GO" id="GO:0008270">
    <property type="term" value="F:zinc ion binding"/>
    <property type="evidence" value="ECO:0007669"/>
    <property type="project" value="UniProtKB-KW"/>
</dbReference>
<dbReference type="GO" id="GO:0007250">
    <property type="term" value="P:activation of NF-kappaB-inducing kinase activity"/>
    <property type="evidence" value="ECO:0000314"/>
    <property type="project" value="UniProtKB"/>
</dbReference>
<dbReference type="GO" id="GO:0070534">
    <property type="term" value="P:protein K63-linked ubiquitination"/>
    <property type="evidence" value="ECO:0000314"/>
    <property type="project" value="UniProtKB"/>
</dbReference>
<dbReference type="GO" id="GO:0006357">
    <property type="term" value="P:regulation of transcription by RNA polymerase II"/>
    <property type="evidence" value="ECO:0000318"/>
    <property type="project" value="GO_Central"/>
</dbReference>
<dbReference type="FunFam" id="3.30.160.60:FF:000183">
    <property type="entry name" value="E3 ubiquitin-protein ligase ZFP91"/>
    <property type="match status" value="1"/>
</dbReference>
<dbReference type="FunFam" id="3.30.160.60:FF:000356">
    <property type="entry name" value="E3 ubiquitin-protein ligase ZFP91"/>
    <property type="match status" value="1"/>
</dbReference>
<dbReference type="Gene3D" id="3.30.160.60">
    <property type="entry name" value="Classic Zinc Finger"/>
    <property type="match status" value="4"/>
</dbReference>
<dbReference type="InterPro" id="IPR051061">
    <property type="entry name" value="Zinc_finger_trans_reg"/>
</dbReference>
<dbReference type="InterPro" id="IPR036236">
    <property type="entry name" value="Znf_C2H2_sf"/>
</dbReference>
<dbReference type="InterPro" id="IPR013087">
    <property type="entry name" value="Znf_C2H2_type"/>
</dbReference>
<dbReference type="PANTHER" id="PTHR46179:SF11">
    <property type="entry name" value="E3 UBIQUITIN-PROTEIN LIGASE ZFP91"/>
    <property type="match status" value="1"/>
</dbReference>
<dbReference type="PANTHER" id="PTHR46179">
    <property type="entry name" value="ZINC FINGER PROTEIN"/>
    <property type="match status" value="1"/>
</dbReference>
<dbReference type="Pfam" id="PF00096">
    <property type="entry name" value="zf-C2H2"/>
    <property type="match status" value="3"/>
</dbReference>
<dbReference type="SMART" id="SM00355">
    <property type="entry name" value="ZnF_C2H2"/>
    <property type="match status" value="5"/>
</dbReference>
<dbReference type="SUPFAM" id="SSF57667">
    <property type="entry name" value="beta-beta-alpha zinc fingers"/>
    <property type="match status" value="3"/>
</dbReference>
<dbReference type="PROSITE" id="PS00028">
    <property type="entry name" value="ZINC_FINGER_C2H2_1"/>
    <property type="match status" value="5"/>
</dbReference>
<dbReference type="PROSITE" id="PS50157">
    <property type="entry name" value="ZINC_FINGER_C2H2_2"/>
    <property type="match status" value="4"/>
</dbReference>
<name>ZFP91_HUMAN</name>